<comment type="function">
    <text evidence="1">Involved in DNA repair and RecF pathway recombination.</text>
</comment>
<comment type="similarity">
    <text evidence="1">Belongs to the RecO family.</text>
</comment>
<protein>
    <recommendedName>
        <fullName evidence="1">DNA repair protein RecO</fullName>
    </recommendedName>
    <alternativeName>
        <fullName evidence="1">Recombination protein O</fullName>
    </alternativeName>
</protein>
<reference key="1">
    <citation type="journal article" date="2006" name="Proc. Natl. Acad. Sci. U.S.A.">
        <title>Evolution of sensory complexity recorded in a myxobacterial genome.</title>
        <authorList>
            <person name="Goldman B.S."/>
            <person name="Nierman W.C."/>
            <person name="Kaiser D."/>
            <person name="Slater S.C."/>
            <person name="Durkin A.S."/>
            <person name="Eisen J.A."/>
            <person name="Ronning C.M."/>
            <person name="Barbazuk W.B."/>
            <person name="Blanchard M."/>
            <person name="Field C."/>
            <person name="Halling C."/>
            <person name="Hinkle G."/>
            <person name="Iartchuk O."/>
            <person name="Kim H.S."/>
            <person name="Mackenzie C."/>
            <person name="Madupu R."/>
            <person name="Miller N."/>
            <person name="Shvartsbeyn A."/>
            <person name="Sullivan S.A."/>
            <person name="Vaudin M."/>
            <person name="Wiegand R."/>
            <person name="Kaplan H.B."/>
        </authorList>
    </citation>
    <scope>NUCLEOTIDE SEQUENCE [LARGE SCALE GENOMIC DNA]</scope>
    <source>
        <strain>DK1622</strain>
    </source>
</reference>
<accession>Q1D7T4</accession>
<proteinExistence type="inferred from homology"/>
<gene>
    <name evidence="1" type="primary">recO</name>
    <name type="ordered locus">MXAN_3086</name>
</gene>
<sequence>MERYDDDALVLSSVDYGESDRLVTLLTREHGKLTAFAAGARKSKRRFAGALEPFMRLRVHIVETRGSTVRLDGTDIVAGFYAAREDLSLIARALYAVELCRELTRDHEPQPELFALLESYLTRLDAKEAGPTSLLAFELSALAHAGLMPRFDSCSLCGGAPGERPRFDQAHGGAVCEPCGVRARESVAVPVALLSGLRALQEGARTPLPPELRARARGLLNVFIAHHLGRRLKSVDFMAQVGLD</sequence>
<organism>
    <name type="scientific">Myxococcus xanthus (strain DK1622)</name>
    <dbReference type="NCBI Taxonomy" id="246197"/>
    <lineage>
        <taxon>Bacteria</taxon>
        <taxon>Pseudomonadati</taxon>
        <taxon>Myxococcota</taxon>
        <taxon>Myxococcia</taxon>
        <taxon>Myxococcales</taxon>
        <taxon>Cystobacterineae</taxon>
        <taxon>Myxococcaceae</taxon>
        <taxon>Myxococcus</taxon>
    </lineage>
</organism>
<name>RECO_MYXXD</name>
<feature type="chain" id="PRO_0000264825" description="DNA repair protein RecO">
    <location>
        <begin position="1"/>
        <end position="244"/>
    </location>
</feature>
<keyword id="KW-0227">DNA damage</keyword>
<keyword id="KW-0233">DNA recombination</keyword>
<keyword id="KW-0234">DNA repair</keyword>
<keyword id="KW-1185">Reference proteome</keyword>
<dbReference type="EMBL" id="CP000113">
    <property type="protein sequence ID" value="ABF89675.1"/>
    <property type="molecule type" value="Genomic_DNA"/>
</dbReference>
<dbReference type="RefSeq" id="WP_011553136.1">
    <property type="nucleotide sequence ID" value="NC_008095.1"/>
</dbReference>
<dbReference type="SMR" id="Q1D7T4"/>
<dbReference type="STRING" id="246197.MXAN_3086"/>
<dbReference type="EnsemblBacteria" id="ABF89675">
    <property type="protein sequence ID" value="ABF89675"/>
    <property type="gene ID" value="MXAN_3086"/>
</dbReference>
<dbReference type="GeneID" id="41360448"/>
<dbReference type="KEGG" id="mxa:MXAN_3086"/>
<dbReference type="eggNOG" id="COG1381">
    <property type="taxonomic scope" value="Bacteria"/>
</dbReference>
<dbReference type="HOGENOM" id="CLU_066632_2_0_7"/>
<dbReference type="OrthoDB" id="9780797at2"/>
<dbReference type="Proteomes" id="UP000002402">
    <property type="component" value="Chromosome"/>
</dbReference>
<dbReference type="GO" id="GO:0043590">
    <property type="term" value="C:bacterial nucleoid"/>
    <property type="evidence" value="ECO:0007669"/>
    <property type="project" value="TreeGrafter"/>
</dbReference>
<dbReference type="GO" id="GO:0006310">
    <property type="term" value="P:DNA recombination"/>
    <property type="evidence" value="ECO:0007669"/>
    <property type="project" value="UniProtKB-UniRule"/>
</dbReference>
<dbReference type="GO" id="GO:0006302">
    <property type="term" value="P:double-strand break repair"/>
    <property type="evidence" value="ECO:0007669"/>
    <property type="project" value="TreeGrafter"/>
</dbReference>
<dbReference type="Gene3D" id="2.40.50.140">
    <property type="entry name" value="Nucleic acid-binding proteins"/>
    <property type="match status" value="1"/>
</dbReference>
<dbReference type="Gene3D" id="1.20.1440.120">
    <property type="entry name" value="Recombination protein O, C-terminal domain"/>
    <property type="match status" value="1"/>
</dbReference>
<dbReference type="HAMAP" id="MF_00201">
    <property type="entry name" value="RecO"/>
    <property type="match status" value="1"/>
</dbReference>
<dbReference type="InterPro" id="IPR037278">
    <property type="entry name" value="ARFGAP/RecO"/>
</dbReference>
<dbReference type="InterPro" id="IPR022572">
    <property type="entry name" value="DNA_rep/recomb_RecO_N"/>
</dbReference>
<dbReference type="InterPro" id="IPR012340">
    <property type="entry name" value="NA-bd_OB-fold"/>
</dbReference>
<dbReference type="InterPro" id="IPR003717">
    <property type="entry name" value="RecO"/>
</dbReference>
<dbReference type="InterPro" id="IPR042242">
    <property type="entry name" value="RecO_C"/>
</dbReference>
<dbReference type="NCBIfam" id="TIGR00613">
    <property type="entry name" value="reco"/>
    <property type="match status" value="1"/>
</dbReference>
<dbReference type="PANTHER" id="PTHR33991">
    <property type="entry name" value="DNA REPAIR PROTEIN RECO"/>
    <property type="match status" value="1"/>
</dbReference>
<dbReference type="PANTHER" id="PTHR33991:SF1">
    <property type="entry name" value="DNA REPAIR PROTEIN RECO"/>
    <property type="match status" value="1"/>
</dbReference>
<dbReference type="Pfam" id="PF02565">
    <property type="entry name" value="RecO_C"/>
    <property type="match status" value="1"/>
</dbReference>
<dbReference type="Pfam" id="PF11967">
    <property type="entry name" value="RecO_N"/>
    <property type="match status" value="1"/>
</dbReference>
<dbReference type="SUPFAM" id="SSF57863">
    <property type="entry name" value="ArfGap/RecO-like zinc finger"/>
    <property type="match status" value="1"/>
</dbReference>
<dbReference type="SUPFAM" id="SSF50249">
    <property type="entry name" value="Nucleic acid-binding proteins"/>
    <property type="match status" value="1"/>
</dbReference>
<evidence type="ECO:0000255" key="1">
    <source>
        <dbReference type="HAMAP-Rule" id="MF_00201"/>
    </source>
</evidence>